<evidence type="ECO:0000250" key="1"/>
<evidence type="ECO:0000255" key="2">
    <source>
        <dbReference type="PROSITE-ProRule" id="PRU00169"/>
    </source>
</evidence>
<evidence type="ECO:0000255" key="3">
    <source>
        <dbReference type="PROSITE-ProRule" id="PRU01091"/>
    </source>
</evidence>
<evidence type="ECO:0000305" key="4"/>
<name>ARCA_ECOL6</name>
<dbReference type="EMBL" id="AE014075">
    <property type="protein sequence ID" value="AAN83908.1"/>
    <property type="molecule type" value="Genomic_DNA"/>
</dbReference>
<dbReference type="RefSeq" id="WP_001194358.1">
    <property type="nucleotide sequence ID" value="NZ_CP051263.1"/>
</dbReference>
<dbReference type="SMR" id="P0A9Q2"/>
<dbReference type="STRING" id="199310.c5488"/>
<dbReference type="GeneID" id="93777444"/>
<dbReference type="KEGG" id="ecc:c5488"/>
<dbReference type="eggNOG" id="COG0745">
    <property type="taxonomic scope" value="Bacteria"/>
</dbReference>
<dbReference type="HOGENOM" id="CLU_000445_30_4_6"/>
<dbReference type="BioCyc" id="ECOL199310:C5488-MONOMER"/>
<dbReference type="Proteomes" id="UP000001410">
    <property type="component" value="Chromosome"/>
</dbReference>
<dbReference type="GO" id="GO:0005829">
    <property type="term" value="C:cytosol"/>
    <property type="evidence" value="ECO:0007669"/>
    <property type="project" value="TreeGrafter"/>
</dbReference>
<dbReference type="GO" id="GO:0032993">
    <property type="term" value="C:protein-DNA complex"/>
    <property type="evidence" value="ECO:0007669"/>
    <property type="project" value="TreeGrafter"/>
</dbReference>
<dbReference type="GO" id="GO:0000156">
    <property type="term" value="F:phosphorelay response regulator activity"/>
    <property type="evidence" value="ECO:0007669"/>
    <property type="project" value="TreeGrafter"/>
</dbReference>
<dbReference type="GO" id="GO:0000976">
    <property type="term" value="F:transcription cis-regulatory region binding"/>
    <property type="evidence" value="ECO:0007669"/>
    <property type="project" value="TreeGrafter"/>
</dbReference>
<dbReference type="GO" id="GO:0006355">
    <property type="term" value="P:regulation of DNA-templated transcription"/>
    <property type="evidence" value="ECO:0007669"/>
    <property type="project" value="InterPro"/>
</dbReference>
<dbReference type="CDD" id="cd17619">
    <property type="entry name" value="REC_OmpR_ArcA_TorR-like"/>
    <property type="match status" value="1"/>
</dbReference>
<dbReference type="CDD" id="cd00383">
    <property type="entry name" value="trans_reg_C"/>
    <property type="match status" value="1"/>
</dbReference>
<dbReference type="FunFam" id="1.10.10.10:FF:000054">
    <property type="entry name" value="Two-component system response regulator ArcA"/>
    <property type="match status" value="1"/>
</dbReference>
<dbReference type="FunFam" id="3.40.50.2300:FF:000006">
    <property type="entry name" value="Two-component system response regulator ArcA"/>
    <property type="match status" value="1"/>
</dbReference>
<dbReference type="Gene3D" id="3.40.50.2300">
    <property type="match status" value="1"/>
</dbReference>
<dbReference type="Gene3D" id="6.10.250.690">
    <property type="match status" value="1"/>
</dbReference>
<dbReference type="Gene3D" id="1.10.10.10">
    <property type="entry name" value="Winged helix-like DNA-binding domain superfamily/Winged helix DNA-binding domain"/>
    <property type="match status" value="1"/>
</dbReference>
<dbReference type="InterPro" id="IPR011006">
    <property type="entry name" value="CheY-like_superfamily"/>
</dbReference>
<dbReference type="InterPro" id="IPR001867">
    <property type="entry name" value="OmpR/PhoB-type_DNA-bd"/>
</dbReference>
<dbReference type="InterPro" id="IPR016032">
    <property type="entry name" value="Sig_transdc_resp-reg_C-effctor"/>
</dbReference>
<dbReference type="InterPro" id="IPR001789">
    <property type="entry name" value="Sig_transdc_resp-reg_receiver"/>
</dbReference>
<dbReference type="InterPro" id="IPR039420">
    <property type="entry name" value="WalR-like"/>
</dbReference>
<dbReference type="InterPro" id="IPR036388">
    <property type="entry name" value="WH-like_DNA-bd_sf"/>
</dbReference>
<dbReference type="NCBIfam" id="NF008378">
    <property type="entry name" value="PRK11173.1"/>
    <property type="match status" value="1"/>
</dbReference>
<dbReference type="PANTHER" id="PTHR48111:SF55">
    <property type="entry name" value="AEROBIC RESPIRATION CONTROL PROTEIN ARCA"/>
    <property type="match status" value="1"/>
</dbReference>
<dbReference type="PANTHER" id="PTHR48111">
    <property type="entry name" value="REGULATOR OF RPOS"/>
    <property type="match status" value="1"/>
</dbReference>
<dbReference type="Pfam" id="PF00072">
    <property type="entry name" value="Response_reg"/>
    <property type="match status" value="1"/>
</dbReference>
<dbReference type="Pfam" id="PF00486">
    <property type="entry name" value="Trans_reg_C"/>
    <property type="match status" value="1"/>
</dbReference>
<dbReference type="SMART" id="SM00448">
    <property type="entry name" value="REC"/>
    <property type="match status" value="1"/>
</dbReference>
<dbReference type="SMART" id="SM00862">
    <property type="entry name" value="Trans_reg_C"/>
    <property type="match status" value="1"/>
</dbReference>
<dbReference type="SUPFAM" id="SSF46894">
    <property type="entry name" value="C-terminal effector domain of the bipartite response regulators"/>
    <property type="match status" value="1"/>
</dbReference>
<dbReference type="SUPFAM" id="SSF52172">
    <property type="entry name" value="CheY-like"/>
    <property type="match status" value="1"/>
</dbReference>
<dbReference type="PROSITE" id="PS51755">
    <property type="entry name" value="OMPR_PHOB"/>
    <property type="match status" value="1"/>
</dbReference>
<dbReference type="PROSITE" id="PS50110">
    <property type="entry name" value="RESPONSE_REGULATORY"/>
    <property type="match status" value="1"/>
</dbReference>
<reference key="1">
    <citation type="journal article" date="2002" name="Proc. Natl. Acad. Sci. U.S.A.">
        <title>Extensive mosaic structure revealed by the complete genome sequence of uropathogenic Escherichia coli.</title>
        <authorList>
            <person name="Welch R.A."/>
            <person name="Burland V."/>
            <person name="Plunkett G. III"/>
            <person name="Redford P."/>
            <person name="Roesch P."/>
            <person name="Rasko D."/>
            <person name="Buckles E.L."/>
            <person name="Liou S.-R."/>
            <person name="Boutin A."/>
            <person name="Hackett J."/>
            <person name="Stroud D."/>
            <person name="Mayhew G.F."/>
            <person name="Rose D.J."/>
            <person name="Zhou S."/>
            <person name="Schwartz D.C."/>
            <person name="Perna N.T."/>
            <person name="Mobley H.L.T."/>
            <person name="Donnenberg M.S."/>
            <person name="Blattner F.R."/>
        </authorList>
    </citation>
    <scope>NUCLEOTIDE SEQUENCE [LARGE SCALE GENOMIC DNA]</scope>
    <source>
        <strain>CFT073 / ATCC 700928 / UPEC</strain>
    </source>
</reference>
<feature type="chain" id="PRO_0000081010" description="Aerobic respiration control protein ArcA">
    <location>
        <begin position="1"/>
        <end position="238"/>
    </location>
</feature>
<feature type="domain" description="Response regulatory" evidence="2">
    <location>
        <begin position="5"/>
        <end position="118"/>
    </location>
</feature>
<feature type="DNA-binding region" description="OmpR/PhoB-type" evidence="3">
    <location>
        <begin position="134"/>
        <end position="234"/>
    </location>
</feature>
<feature type="modified residue" description="4-aspartylphosphate" evidence="2">
    <location>
        <position position="54"/>
    </location>
</feature>
<protein>
    <recommendedName>
        <fullName>Aerobic respiration control protein ArcA</fullName>
    </recommendedName>
</protein>
<proteinExistence type="inferred from homology"/>
<gene>
    <name type="primary">arcA</name>
    <name type="ordered locus">c5488</name>
</gene>
<keyword id="KW-0010">Activator</keyword>
<keyword id="KW-0963">Cytoplasm</keyword>
<keyword id="KW-0238">DNA-binding</keyword>
<keyword id="KW-0597">Phosphoprotein</keyword>
<keyword id="KW-1185">Reference proteome</keyword>
<keyword id="KW-0678">Repressor</keyword>
<keyword id="KW-0804">Transcription</keyword>
<keyword id="KW-0805">Transcription regulation</keyword>
<keyword id="KW-0902">Two-component regulatory system</keyword>
<organism>
    <name type="scientific">Escherichia coli O6:H1 (strain CFT073 / ATCC 700928 / UPEC)</name>
    <dbReference type="NCBI Taxonomy" id="199310"/>
    <lineage>
        <taxon>Bacteria</taxon>
        <taxon>Pseudomonadati</taxon>
        <taxon>Pseudomonadota</taxon>
        <taxon>Gammaproteobacteria</taxon>
        <taxon>Enterobacterales</taxon>
        <taxon>Enterobacteriaceae</taxon>
        <taxon>Escherichia</taxon>
    </lineage>
</organism>
<sequence length="238" mass="27292">MQTPHILIVEDELVTRNTLKSIFEAEGYDVFEATDGAEMHQILSEYDINLVIMDINLPGKNGLLLARELREQANVALMFLTGRDNEVDKILGLEIGADDYITKPFNPRELTIRARNLLSRTMNLGTVSEERRSVESYKFNGWELDINSRSLIGPDGEQYKLPRSEFRAMLHFCENPGKIQSRAELLKKMTGRELKPHDRTVDVTIRRIRKHFESTPDTPEIIATIHGEGYRFCGDLED</sequence>
<accession>P0A9Q2</accession>
<accession>P03026</accession>
<comment type="function">
    <text evidence="1">Member of the two-component regulatory system ArcB/ArcA. Represses a wide variety of aerobic enzymes under anaerobic conditions. It may also be involved in the osmoregulation of envelope proteins. When activated by ArcB, it negatively regulates the expression of genes of aerobic function. Activates the transcription of the plfB operon by binding to its promoter (By similarity).</text>
</comment>
<comment type="subcellular location">
    <subcellularLocation>
        <location evidence="1">Cytoplasm</location>
    </subcellularLocation>
</comment>
<comment type="PTM">
    <text evidence="1">Phosphorylated by ArcB.</text>
</comment>
<comment type="caution">
    <text evidence="4">There are two genes termed arcA in strain O6 of E.coli, one refers to an arginine deiminase and the other to a two-component regulator.</text>
</comment>